<proteinExistence type="evidence at transcript level"/>
<gene>
    <name evidence="5" type="primary">atmQ</name>
</gene>
<dbReference type="EC" id="1.-.-.-" evidence="7"/>
<dbReference type="EMBL" id="AM921700">
    <property type="protein sequence ID" value="CAP53938.1"/>
    <property type="molecule type" value="Genomic_DNA"/>
</dbReference>
<dbReference type="SMR" id="A9JPE2"/>
<dbReference type="VEuPathDB" id="FungiDB:AFLA_008139"/>
<dbReference type="VEuPathDB" id="FungiDB:F9C07_2281027"/>
<dbReference type="BioCyc" id="MetaCyc:MONOMER-18803"/>
<dbReference type="GO" id="GO:0016020">
    <property type="term" value="C:membrane"/>
    <property type="evidence" value="ECO:0007669"/>
    <property type="project" value="UniProtKB-SubCell"/>
</dbReference>
<dbReference type="GO" id="GO:0020037">
    <property type="term" value="F:heme binding"/>
    <property type="evidence" value="ECO:0007669"/>
    <property type="project" value="InterPro"/>
</dbReference>
<dbReference type="GO" id="GO:0005506">
    <property type="term" value="F:iron ion binding"/>
    <property type="evidence" value="ECO:0007669"/>
    <property type="project" value="InterPro"/>
</dbReference>
<dbReference type="GO" id="GO:0004497">
    <property type="term" value="F:monooxygenase activity"/>
    <property type="evidence" value="ECO:0007669"/>
    <property type="project" value="UniProtKB-KW"/>
</dbReference>
<dbReference type="GO" id="GO:0016705">
    <property type="term" value="F:oxidoreductase activity, acting on paired donors, with incorporation or reduction of molecular oxygen"/>
    <property type="evidence" value="ECO:0007669"/>
    <property type="project" value="InterPro"/>
</dbReference>
<dbReference type="GO" id="GO:0019748">
    <property type="term" value="P:secondary metabolic process"/>
    <property type="evidence" value="ECO:0007669"/>
    <property type="project" value="UniProtKB-ARBA"/>
</dbReference>
<dbReference type="CDD" id="cd11041">
    <property type="entry name" value="CYP503A1-like"/>
    <property type="match status" value="1"/>
</dbReference>
<dbReference type="Gene3D" id="1.10.630.10">
    <property type="entry name" value="Cytochrome P450"/>
    <property type="match status" value="1"/>
</dbReference>
<dbReference type="InterPro" id="IPR001128">
    <property type="entry name" value="Cyt_P450"/>
</dbReference>
<dbReference type="InterPro" id="IPR017972">
    <property type="entry name" value="Cyt_P450_CS"/>
</dbReference>
<dbReference type="InterPro" id="IPR002401">
    <property type="entry name" value="Cyt_P450_E_grp-I"/>
</dbReference>
<dbReference type="InterPro" id="IPR036396">
    <property type="entry name" value="Cyt_P450_sf"/>
</dbReference>
<dbReference type="PANTHER" id="PTHR46206">
    <property type="entry name" value="CYTOCHROME P450"/>
    <property type="match status" value="1"/>
</dbReference>
<dbReference type="PANTHER" id="PTHR46206:SF5">
    <property type="entry name" value="P450, PUTATIVE (EUROFUNG)-RELATED"/>
    <property type="match status" value="1"/>
</dbReference>
<dbReference type="Pfam" id="PF00067">
    <property type="entry name" value="p450"/>
    <property type="match status" value="1"/>
</dbReference>
<dbReference type="PRINTS" id="PR00463">
    <property type="entry name" value="EP450I"/>
</dbReference>
<dbReference type="SUPFAM" id="SSF48264">
    <property type="entry name" value="Cytochrome P450"/>
    <property type="match status" value="1"/>
</dbReference>
<dbReference type="PROSITE" id="PS00086">
    <property type="entry name" value="CYTOCHROME_P450"/>
    <property type="match status" value="1"/>
</dbReference>
<sequence length="529" mass="61092">MYRLLERTLDRFTGLVEYQPTYPFAAPTWVYLVGAILIQQLATRWYRYYKSWVNVPVVGGHGIIGSWIAAFRWTARARSLVNEGYQKYGDFAFQVSTPTRWEVFICNDEMVREYRNFTDERFSANALFEAKYTVPGAAEGVHKVPVPIVAKALTWQRTRAATKTDPYFEEFVKELQHAFDAETKFENEDWNDLCCFATGTRIVAHLTAKSLVGYPLSRDTELIDLFAEYGNAVPTSGFFIAMFPQILKPFAAKFCSAPKISARLDRIVMDELRKREANPRSEPQVQDITDWITFWSRTYPGTYTDQDIARSVVSAVFGAIHTTTQVLVHCLTDLAIRPEYIHPLREEVETILNRDDQQWTKEGLESMEKLDSFVKECQRFNPLDAGSLARRATKDFTFSKGLHIPEGTFVFTPNSPVLFDEKHYPDAQQFDGYRFYRLGRVTGRPLEYKFIAANLKYLQFGDGRHICPGRFMAADEIRLLLAHILVNYDIRPKDDGERPPNWTFKKILFPDMKGMVQLKRRSINISQPN</sequence>
<organism>
    <name type="scientific">Aspergillus flavus</name>
    <dbReference type="NCBI Taxonomy" id="5059"/>
    <lineage>
        <taxon>Eukaryota</taxon>
        <taxon>Fungi</taxon>
        <taxon>Dikarya</taxon>
        <taxon>Ascomycota</taxon>
        <taxon>Pezizomycotina</taxon>
        <taxon>Eurotiomycetes</taxon>
        <taxon>Eurotiomycetidae</taxon>
        <taxon>Eurotiales</taxon>
        <taxon>Aspergillaceae</taxon>
        <taxon>Aspergillus</taxon>
        <taxon>Aspergillus subgen. Circumdati</taxon>
    </lineage>
</organism>
<comment type="function">
    <text evidence="3 4">Cytochrome P450 monooxygenase; part of the ATM2 gene cluster that mediates the biosynthesis of aflatrem, a tremorgenic mycotoxin with acute neurotoxic effects (PubMed:19801473, PubMed:2867895). Synthesis of geranylgeranyl diphosphate (GGPP) by AtmG (a GGPP synthase) precedes condensation of GGPP with indole 3-glycerol phosphate, followed by epoxidation and cyclization by AtmM (a FAD-dependent monooxygenase) and AtmC (a prenyltransferase) to produce paspaline (PubMed:19801473). AtmB is also essential for paspaline production, but its exact role has not been identified yet (PubMed:19801473). AtmP, a cytochrome P450 monooxygenase, subsequently converts paspaline to 13-desoxypaxilline via PC-M6 by removal of the C-30 methyl group and oxidation at C-10 (PubMed:19801473). AtmQ, a cytochrome P450 monooxygenase, then catalyzes the oxidation of 13-desoxypaxilline, first at C-7 to produce paspalicine and then at C-13 to form paspalinine (PubMed:19801473). Finally, AtmD prenylates paspalinine to form aflatrem (PubMed:19801473).</text>
</comment>
<comment type="cofactor">
    <cofactor evidence="1">
        <name>heme</name>
        <dbReference type="ChEBI" id="CHEBI:30413"/>
    </cofactor>
</comment>
<comment type="pathway">
    <text evidence="7">Secondary metabolite biosynthesis.</text>
</comment>
<comment type="subcellular location">
    <subcellularLocation>
        <location evidence="2">Membrane</location>
        <topology evidence="2">Multi-pass membrane protein</topology>
    </subcellularLocation>
</comment>
<comment type="induction">
    <text evidence="3">The onset of expression occurs at 48-hour-old stationary cultures (PubMed:19801473).</text>
</comment>
<comment type="similarity">
    <text evidence="6">Belongs to the cytochrome P450 family.</text>
</comment>
<keyword id="KW-0349">Heme</keyword>
<keyword id="KW-0408">Iron</keyword>
<keyword id="KW-0472">Membrane</keyword>
<keyword id="KW-0479">Metal-binding</keyword>
<keyword id="KW-0503">Monooxygenase</keyword>
<keyword id="KW-0560">Oxidoreductase</keyword>
<keyword id="KW-0812">Transmembrane</keyword>
<keyword id="KW-1133">Transmembrane helix</keyword>
<evidence type="ECO:0000250" key="1">
    <source>
        <dbReference type="UniProtKB" id="P04798"/>
    </source>
</evidence>
<evidence type="ECO:0000255" key="2"/>
<evidence type="ECO:0000269" key="3">
    <source>
    </source>
</evidence>
<evidence type="ECO:0000269" key="4">
    <source>
    </source>
</evidence>
<evidence type="ECO:0000303" key="5">
    <source>
    </source>
</evidence>
<evidence type="ECO:0000305" key="6"/>
<evidence type="ECO:0000305" key="7">
    <source>
    </source>
</evidence>
<reference key="1">
    <citation type="journal article" date="2009" name="Appl. Environ. Microbiol.">
        <title>Identification of two aflatrem biosynthesis gene loci in Aspergillus flavus and metabolic engineering of Penicillium paxilli to elucidate their function.</title>
        <authorList>
            <person name="Nicholson M.J."/>
            <person name="Koulman A."/>
            <person name="Monahan B.J."/>
            <person name="Pritchard B.L."/>
            <person name="Payne G.A."/>
            <person name="Scott B."/>
        </authorList>
    </citation>
    <scope>NUCLEOTIDE SEQUENCE [GENOMIC DNA]</scope>
    <scope>IDENTIFICATION</scope>
    <scope>INDUCTION</scope>
    <scope>FUNCTION</scope>
    <source>
        <strain>NRRL 6541</strain>
    </source>
</reference>
<reference key="2">
    <citation type="journal article" date="1985" name="Environ. Health Perspect.">
        <title>Aflatrem: a tremorgenic mycotoxin with acute neurotoxic effects.</title>
        <authorList>
            <person name="Valdes J.J."/>
            <person name="Cameron J.E."/>
            <person name="Cole R.J."/>
        </authorList>
    </citation>
    <scope>FUNCTION</scope>
</reference>
<feature type="chain" id="PRO_0000436126" description="Cytochrome P450 monooxygenase atmQ">
    <location>
        <begin position="1"/>
        <end position="529"/>
    </location>
</feature>
<feature type="transmembrane region" description="Helical" evidence="2">
    <location>
        <begin position="22"/>
        <end position="42"/>
    </location>
</feature>
<feature type="transmembrane region" description="Helical" evidence="2">
    <location>
        <begin position="51"/>
        <end position="71"/>
    </location>
</feature>
<feature type="binding site" description="axial binding residue" evidence="1">
    <location>
        <position position="467"/>
    </location>
    <ligand>
        <name>heme</name>
        <dbReference type="ChEBI" id="CHEBI:30413"/>
    </ligand>
    <ligandPart>
        <name>Fe</name>
        <dbReference type="ChEBI" id="CHEBI:18248"/>
    </ligandPart>
</feature>
<name>ATMQ_ASPFL</name>
<protein>
    <recommendedName>
        <fullName evidence="5">Cytochrome P450 monooxygenase atmQ</fullName>
        <ecNumber evidence="7">1.-.-.-</ecNumber>
    </recommendedName>
    <alternativeName>
        <fullName evidence="5">Aflatrem synthesis protein Q</fullName>
    </alternativeName>
</protein>
<accession>A9JPE2</accession>